<name>DNAA_LEGPC</name>
<accession>A5I9F1</accession>
<sequence>MSTTAWQKCLGLLQDEFSAQQFNTWLRPLQAYMDEQRLILLAPNRFVVDWVRKHFFSRIEELIKQFSGDDIKAISIEVGSKPVEAVDTPAETIVTSSSTAPLKSAPKKAVDYKSSHLNKKFVFDSFVEGNSNQLARAASMQVAERPGDAYNPLFIYGGVGLGKTHLMHAIGNSILKNNPEAKVLYLHSERFVADMVKALQTNSINEFKRFYRSLNALLIDDIQFFAGKDRSQEEFFHTFNALLEGQQQIILTSDRYPKEIEGMEERLKSRFGWGLTVAVEPPELETRVAILISKAEQSNIELPYEVAFFIAKRIRSNVRELEGALRRVIANAHFTGKPITIEFVHEALRDLLALQDKLVTIENIQKTVAEYYKVKVADLLSKRRSRSIARPRQMAMALSKELTNHSLPEIGDHFGGKDHTTVIHACRKVKELIQDDSDFAEDYKNLMRILSS</sequence>
<gene>
    <name evidence="1" type="primary">dnaA</name>
    <name type="ordered locus">LPC_0001</name>
</gene>
<comment type="function">
    <text evidence="1">Plays an essential role in the initiation and regulation of chromosomal replication. ATP-DnaA binds to the origin of replication (oriC) to initiate formation of the DNA replication initiation complex once per cell cycle. Binds the DnaA box (a 9 base pair repeat at the origin) and separates the double-stranded (ds)DNA. Forms a right-handed helical filament on oriC DNA; dsDNA binds to the exterior of the filament while single-stranded (ss)DNA is stabiized in the filament's interior. The ATP-DnaA-oriC complex binds and stabilizes one strand of the AT-rich DNA unwinding element (DUE), permitting loading of DNA polymerase. After initiation quickly degrades to an ADP-DnaA complex that is not apt for DNA replication. Binds acidic phospholipids.</text>
</comment>
<comment type="subunit">
    <text evidence="1">Oligomerizes as a right-handed, spiral filament on DNA at oriC.</text>
</comment>
<comment type="subcellular location">
    <subcellularLocation>
        <location evidence="1">Cytoplasm</location>
    </subcellularLocation>
</comment>
<comment type="domain">
    <text evidence="1">Domain I is involved in oligomerization and binding regulators, domain II is flexibile and of varying length in different bacteria, domain III forms the AAA+ region, while domain IV binds dsDNA.</text>
</comment>
<comment type="similarity">
    <text evidence="1">Belongs to the DnaA family.</text>
</comment>
<feature type="chain" id="PRO_1000048666" description="Chromosomal replication initiator protein DnaA">
    <location>
        <begin position="1"/>
        <end position="452"/>
    </location>
</feature>
<feature type="region of interest" description="Domain I, interacts with DnaA modulators" evidence="1">
    <location>
        <begin position="1"/>
        <end position="85"/>
    </location>
</feature>
<feature type="region of interest" description="Domain II" evidence="1">
    <location>
        <begin position="85"/>
        <end position="115"/>
    </location>
</feature>
<feature type="region of interest" description="Domain III, AAA+ region" evidence="1">
    <location>
        <begin position="116"/>
        <end position="332"/>
    </location>
</feature>
<feature type="region of interest" description="Domain IV, binds dsDNA" evidence="1">
    <location>
        <begin position="333"/>
        <end position="452"/>
    </location>
</feature>
<feature type="binding site" evidence="1">
    <location>
        <position position="160"/>
    </location>
    <ligand>
        <name>ATP</name>
        <dbReference type="ChEBI" id="CHEBI:30616"/>
    </ligand>
</feature>
<feature type="binding site" evidence="1">
    <location>
        <position position="162"/>
    </location>
    <ligand>
        <name>ATP</name>
        <dbReference type="ChEBI" id="CHEBI:30616"/>
    </ligand>
</feature>
<feature type="binding site" evidence="1">
    <location>
        <position position="163"/>
    </location>
    <ligand>
        <name>ATP</name>
        <dbReference type="ChEBI" id="CHEBI:30616"/>
    </ligand>
</feature>
<feature type="binding site" evidence="1">
    <location>
        <position position="164"/>
    </location>
    <ligand>
        <name>ATP</name>
        <dbReference type="ChEBI" id="CHEBI:30616"/>
    </ligand>
</feature>
<dbReference type="EMBL" id="CP000675">
    <property type="protein sequence ID" value="ABQ54001.1"/>
    <property type="molecule type" value="Genomic_DNA"/>
</dbReference>
<dbReference type="RefSeq" id="WP_010945763.1">
    <property type="nucleotide sequence ID" value="NZ_JAPMSS010000003.1"/>
</dbReference>
<dbReference type="SMR" id="A5I9F1"/>
<dbReference type="GeneID" id="57034007"/>
<dbReference type="KEGG" id="lpc:LPC_0001"/>
<dbReference type="HOGENOM" id="CLU_026910_0_1_6"/>
<dbReference type="GO" id="GO:0005737">
    <property type="term" value="C:cytoplasm"/>
    <property type="evidence" value="ECO:0007669"/>
    <property type="project" value="UniProtKB-SubCell"/>
</dbReference>
<dbReference type="GO" id="GO:0005886">
    <property type="term" value="C:plasma membrane"/>
    <property type="evidence" value="ECO:0007669"/>
    <property type="project" value="TreeGrafter"/>
</dbReference>
<dbReference type="GO" id="GO:0005524">
    <property type="term" value="F:ATP binding"/>
    <property type="evidence" value="ECO:0007669"/>
    <property type="project" value="UniProtKB-UniRule"/>
</dbReference>
<dbReference type="GO" id="GO:0016887">
    <property type="term" value="F:ATP hydrolysis activity"/>
    <property type="evidence" value="ECO:0007669"/>
    <property type="project" value="InterPro"/>
</dbReference>
<dbReference type="GO" id="GO:0003688">
    <property type="term" value="F:DNA replication origin binding"/>
    <property type="evidence" value="ECO:0007669"/>
    <property type="project" value="UniProtKB-UniRule"/>
</dbReference>
<dbReference type="GO" id="GO:0008289">
    <property type="term" value="F:lipid binding"/>
    <property type="evidence" value="ECO:0007669"/>
    <property type="project" value="UniProtKB-KW"/>
</dbReference>
<dbReference type="GO" id="GO:0006270">
    <property type="term" value="P:DNA replication initiation"/>
    <property type="evidence" value="ECO:0007669"/>
    <property type="project" value="UniProtKB-UniRule"/>
</dbReference>
<dbReference type="GO" id="GO:0006275">
    <property type="term" value="P:regulation of DNA replication"/>
    <property type="evidence" value="ECO:0007669"/>
    <property type="project" value="UniProtKB-UniRule"/>
</dbReference>
<dbReference type="CDD" id="cd00009">
    <property type="entry name" value="AAA"/>
    <property type="match status" value="1"/>
</dbReference>
<dbReference type="CDD" id="cd06571">
    <property type="entry name" value="Bac_DnaA_C"/>
    <property type="match status" value="1"/>
</dbReference>
<dbReference type="FunFam" id="1.10.1750.10:FF:000001">
    <property type="entry name" value="Chromosomal replication initiator protein DnaA"/>
    <property type="match status" value="1"/>
</dbReference>
<dbReference type="FunFam" id="1.10.8.60:FF:000003">
    <property type="entry name" value="Chromosomal replication initiator protein DnaA"/>
    <property type="match status" value="1"/>
</dbReference>
<dbReference type="FunFam" id="3.40.50.300:FF:000103">
    <property type="entry name" value="Chromosomal replication initiator protein DnaA"/>
    <property type="match status" value="1"/>
</dbReference>
<dbReference type="Gene3D" id="1.10.1750.10">
    <property type="match status" value="1"/>
</dbReference>
<dbReference type="Gene3D" id="1.10.8.60">
    <property type="match status" value="1"/>
</dbReference>
<dbReference type="Gene3D" id="3.30.300.180">
    <property type="match status" value="1"/>
</dbReference>
<dbReference type="Gene3D" id="3.40.50.300">
    <property type="entry name" value="P-loop containing nucleotide triphosphate hydrolases"/>
    <property type="match status" value="1"/>
</dbReference>
<dbReference type="HAMAP" id="MF_00377">
    <property type="entry name" value="DnaA_bact"/>
    <property type="match status" value="1"/>
</dbReference>
<dbReference type="InterPro" id="IPR003593">
    <property type="entry name" value="AAA+_ATPase"/>
</dbReference>
<dbReference type="InterPro" id="IPR001957">
    <property type="entry name" value="Chromosome_initiator_DnaA"/>
</dbReference>
<dbReference type="InterPro" id="IPR020591">
    <property type="entry name" value="Chromosome_initiator_DnaA-like"/>
</dbReference>
<dbReference type="InterPro" id="IPR018312">
    <property type="entry name" value="Chromosome_initiator_DnaA_CS"/>
</dbReference>
<dbReference type="InterPro" id="IPR013159">
    <property type="entry name" value="DnaA_C"/>
</dbReference>
<dbReference type="InterPro" id="IPR013317">
    <property type="entry name" value="DnaA_dom"/>
</dbReference>
<dbReference type="InterPro" id="IPR024633">
    <property type="entry name" value="DnaA_N_dom"/>
</dbReference>
<dbReference type="InterPro" id="IPR038454">
    <property type="entry name" value="DnaA_N_sf"/>
</dbReference>
<dbReference type="InterPro" id="IPR027417">
    <property type="entry name" value="P-loop_NTPase"/>
</dbReference>
<dbReference type="InterPro" id="IPR010921">
    <property type="entry name" value="Trp_repressor/repl_initiator"/>
</dbReference>
<dbReference type="NCBIfam" id="TIGR00362">
    <property type="entry name" value="DnaA"/>
    <property type="match status" value="1"/>
</dbReference>
<dbReference type="PANTHER" id="PTHR30050">
    <property type="entry name" value="CHROMOSOMAL REPLICATION INITIATOR PROTEIN DNAA"/>
    <property type="match status" value="1"/>
</dbReference>
<dbReference type="PANTHER" id="PTHR30050:SF2">
    <property type="entry name" value="CHROMOSOMAL REPLICATION INITIATOR PROTEIN DNAA"/>
    <property type="match status" value="1"/>
</dbReference>
<dbReference type="Pfam" id="PF00308">
    <property type="entry name" value="Bac_DnaA"/>
    <property type="match status" value="1"/>
</dbReference>
<dbReference type="Pfam" id="PF08299">
    <property type="entry name" value="Bac_DnaA_C"/>
    <property type="match status" value="1"/>
</dbReference>
<dbReference type="Pfam" id="PF11638">
    <property type="entry name" value="DnaA_N"/>
    <property type="match status" value="1"/>
</dbReference>
<dbReference type="PRINTS" id="PR00051">
    <property type="entry name" value="DNAA"/>
</dbReference>
<dbReference type="SMART" id="SM00382">
    <property type="entry name" value="AAA"/>
    <property type="match status" value="1"/>
</dbReference>
<dbReference type="SMART" id="SM00760">
    <property type="entry name" value="Bac_DnaA_C"/>
    <property type="match status" value="1"/>
</dbReference>
<dbReference type="SUPFAM" id="SSF52540">
    <property type="entry name" value="P-loop containing nucleoside triphosphate hydrolases"/>
    <property type="match status" value="1"/>
</dbReference>
<dbReference type="SUPFAM" id="SSF48295">
    <property type="entry name" value="TrpR-like"/>
    <property type="match status" value="1"/>
</dbReference>
<dbReference type="PROSITE" id="PS01008">
    <property type="entry name" value="DNAA"/>
    <property type="match status" value="1"/>
</dbReference>
<reference key="1">
    <citation type="submission" date="2006-11" db="EMBL/GenBank/DDBJ databases">
        <title>Identification and characterization of a new conjugation/ type IVA secretion system (trb/tra) of L. pneumophila Corby localized on a mobile genomic island.</title>
        <authorList>
            <person name="Gloeckner G."/>
            <person name="Albert-Weissenberger C."/>
            <person name="Weinmann E."/>
            <person name="Jacobi S."/>
            <person name="Schunder E."/>
            <person name="Steinert M."/>
            <person name="Buchrieser C."/>
            <person name="Hacker J."/>
            <person name="Heuner K."/>
        </authorList>
    </citation>
    <scope>NUCLEOTIDE SEQUENCE [LARGE SCALE GENOMIC DNA]</scope>
    <source>
        <strain>Corby</strain>
    </source>
</reference>
<protein>
    <recommendedName>
        <fullName evidence="1">Chromosomal replication initiator protein DnaA</fullName>
    </recommendedName>
</protein>
<keyword id="KW-0067">ATP-binding</keyword>
<keyword id="KW-0963">Cytoplasm</keyword>
<keyword id="KW-0235">DNA replication</keyword>
<keyword id="KW-0238">DNA-binding</keyword>
<keyword id="KW-0446">Lipid-binding</keyword>
<keyword id="KW-0547">Nucleotide-binding</keyword>
<organism>
    <name type="scientific">Legionella pneumophila (strain Corby)</name>
    <dbReference type="NCBI Taxonomy" id="400673"/>
    <lineage>
        <taxon>Bacteria</taxon>
        <taxon>Pseudomonadati</taxon>
        <taxon>Pseudomonadota</taxon>
        <taxon>Gammaproteobacteria</taxon>
        <taxon>Legionellales</taxon>
        <taxon>Legionellaceae</taxon>
        <taxon>Legionella</taxon>
    </lineage>
</organism>
<proteinExistence type="inferred from homology"/>
<evidence type="ECO:0000255" key="1">
    <source>
        <dbReference type="HAMAP-Rule" id="MF_00377"/>
    </source>
</evidence>